<comment type="function">
    <text evidence="1">Protein S19 forms a complex with S13 that binds strongly to the 16S ribosomal RNA.</text>
</comment>
<comment type="similarity">
    <text evidence="1">Belongs to the universal ribosomal protein uS19 family.</text>
</comment>
<sequence>MTRSIKKGPFVDAHLQKKVDEQNEKGTKNVIKTWSRRSMITPDFIGHTFAVHDGRKHVPVFVTEAMVGHKLGEFAPTKTFKGHVKDDKKARR</sequence>
<dbReference type="EMBL" id="AE014295">
    <property type="protein sequence ID" value="AAN25373.1"/>
    <property type="molecule type" value="Genomic_DNA"/>
</dbReference>
<dbReference type="RefSeq" id="NP_696737.1">
    <property type="nucleotide sequence ID" value="NC_004307.2"/>
</dbReference>
<dbReference type="RefSeq" id="WP_003814508.1">
    <property type="nucleotide sequence ID" value="NC_004307.2"/>
</dbReference>
<dbReference type="SMR" id="Q8G413"/>
<dbReference type="STRING" id="206672.BL1582"/>
<dbReference type="EnsemblBacteria" id="AAN25373">
    <property type="protein sequence ID" value="AAN25373"/>
    <property type="gene ID" value="BL1582"/>
</dbReference>
<dbReference type="GeneID" id="93093117"/>
<dbReference type="KEGG" id="blo:BL1582"/>
<dbReference type="PATRIC" id="fig|206672.9.peg.1639"/>
<dbReference type="HOGENOM" id="CLU_144911_0_1_11"/>
<dbReference type="OrthoDB" id="9797833at2"/>
<dbReference type="PhylomeDB" id="Q8G413"/>
<dbReference type="PRO" id="PR:Q8G413"/>
<dbReference type="Proteomes" id="UP000000439">
    <property type="component" value="Chromosome"/>
</dbReference>
<dbReference type="GO" id="GO:0005737">
    <property type="term" value="C:cytoplasm"/>
    <property type="evidence" value="ECO:0007669"/>
    <property type="project" value="UniProtKB-ARBA"/>
</dbReference>
<dbReference type="GO" id="GO:0015935">
    <property type="term" value="C:small ribosomal subunit"/>
    <property type="evidence" value="ECO:0007669"/>
    <property type="project" value="InterPro"/>
</dbReference>
<dbReference type="GO" id="GO:0019843">
    <property type="term" value="F:rRNA binding"/>
    <property type="evidence" value="ECO:0007669"/>
    <property type="project" value="UniProtKB-UniRule"/>
</dbReference>
<dbReference type="GO" id="GO:0003735">
    <property type="term" value="F:structural constituent of ribosome"/>
    <property type="evidence" value="ECO:0007669"/>
    <property type="project" value="InterPro"/>
</dbReference>
<dbReference type="GO" id="GO:0000028">
    <property type="term" value="P:ribosomal small subunit assembly"/>
    <property type="evidence" value="ECO:0007669"/>
    <property type="project" value="TreeGrafter"/>
</dbReference>
<dbReference type="GO" id="GO:0006412">
    <property type="term" value="P:translation"/>
    <property type="evidence" value="ECO:0007669"/>
    <property type="project" value="UniProtKB-UniRule"/>
</dbReference>
<dbReference type="FunFam" id="3.30.860.10:FF:000001">
    <property type="entry name" value="30S ribosomal protein S19"/>
    <property type="match status" value="1"/>
</dbReference>
<dbReference type="Gene3D" id="3.30.860.10">
    <property type="entry name" value="30s Ribosomal Protein S19, Chain A"/>
    <property type="match status" value="1"/>
</dbReference>
<dbReference type="HAMAP" id="MF_00531">
    <property type="entry name" value="Ribosomal_uS19"/>
    <property type="match status" value="1"/>
</dbReference>
<dbReference type="InterPro" id="IPR002222">
    <property type="entry name" value="Ribosomal_uS19"/>
</dbReference>
<dbReference type="InterPro" id="IPR005732">
    <property type="entry name" value="Ribosomal_uS19_bac-type"/>
</dbReference>
<dbReference type="InterPro" id="IPR020934">
    <property type="entry name" value="Ribosomal_uS19_CS"/>
</dbReference>
<dbReference type="InterPro" id="IPR023575">
    <property type="entry name" value="Ribosomal_uS19_SF"/>
</dbReference>
<dbReference type="NCBIfam" id="TIGR01050">
    <property type="entry name" value="rpsS_bact"/>
    <property type="match status" value="1"/>
</dbReference>
<dbReference type="PANTHER" id="PTHR11880">
    <property type="entry name" value="RIBOSOMAL PROTEIN S19P FAMILY MEMBER"/>
    <property type="match status" value="1"/>
</dbReference>
<dbReference type="PANTHER" id="PTHR11880:SF8">
    <property type="entry name" value="SMALL RIBOSOMAL SUBUNIT PROTEIN US19M"/>
    <property type="match status" value="1"/>
</dbReference>
<dbReference type="Pfam" id="PF00203">
    <property type="entry name" value="Ribosomal_S19"/>
    <property type="match status" value="1"/>
</dbReference>
<dbReference type="PIRSF" id="PIRSF002144">
    <property type="entry name" value="Ribosomal_S19"/>
    <property type="match status" value="1"/>
</dbReference>
<dbReference type="PRINTS" id="PR00975">
    <property type="entry name" value="RIBOSOMALS19"/>
</dbReference>
<dbReference type="SUPFAM" id="SSF54570">
    <property type="entry name" value="Ribosomal protein S19"/>
    <property type="match status" value="1"/>
</dbReference>
<dbReference type="PROSITE" id="PS00323">
    <property type="entry name" value="RIBOSOMAL_S19"/>
    <property type="match status" value="1"/>
</dbReference>
<gene>
    <name evidence="1" type="primary">rpsS</name>
    <name type="ordered locus">BL1582</name>
</gene>
<organism>
    <name type="scientific">Bifidobacterium longum (strain NCC 2705)</name>
    <dbReference type="NCBI Taxonomy" id="206672"/>
    <lineage>
        <taxon>Bacteria</taxon>
        <taxon>Bacillati</taxon>
        <taxon>Actinomycetota</taxon>
        <taxon>Actinomycetes</taxon>
        <taxon>Bifidobacteriales</taxon>
        <taxon>Bifidobacteriaceae</taxon>
        <taxon>Bifidobacterium</taxon>
    </lineage>
</organism>
<name>RS19_BIFLO</name>
<proteinExistence type="inferred from homology"/>
<evidence type="ECO:0000255" key="1">
    <source>
        <dbReference type="HAMAP-Rule" id="MF_00531"/>
    </source>
</evidence>
<evidence type="ECO:0000305" key="2"/>
<reference key="1">
    <citation type="journal article" date="2002" name="Proc. Natl. Acad. Sci. U.S.A.">
        <title>The genome sequence of Bifidobacterium longum reflects its adaptation to the human gastrointestinal tract.</title>
        <authorList>
            <person name="Schell M.A."/>
            <person name="Karmirantzou M."/>
            <person name="Snel B."/>
            <person name="Vilanova D."/>
            <person name="Berger B."/>
            <person name="Pessi G."/>
            <person name="Zwahlen M.-C."/>
            <person name="Desiere F."/>
            <person name="Bork P."/>
            <person name="Delley M."/>
            <person name="Pridmore R.D."/>
            <person name="Arigoni F."/>
        </authorList>
    </citation>
    <scope>NUCLEOTIDE SEQUENCE [LARGE SCALE GENOMIC DNA]</scope>
    <source>
        <strain>NCC 2705</strain>
    </source>
</reference>
<accession>Q8G413</accession>
<feature type="chain" id="PRO_0000129785" description="Small ribosomal subunit protein uS19">
    <location>
        <begin position="1"/>
        <end position="92"/>
    </location>
</feature>
<protein>
    <recommendedName>
        <fullName evidence="1">Small ribosomal subunit protein uS19</fullName>
    </recommendedName>
    <alternativeName>
        <fullName evidence="2">30S ribosomal protein S19</fullName>
    </alternativeName>
</protein>
<keyword id="KW-1185">Reference proteome</keyword>
<keyword id="KW-0687">Ribonucleoprotein</keyword>
<keyword id="KW-0689">Ribosomal protein</keyword>
<keyword id="KW-0694">RNA-binding</keyword>
<keyword id="KW-0699">rRNA-binding</keyword>